<sequence>MVRRLTSPRLEFEAAAIYEYPEHLRSFLNDLPTRPGVYLFHGESDTMPLYIGKSVNIRSRVLSHLRTPDEAAMLRQSRRISWICTAGEIGALLLEARLIKEQQPLFNKRLRRNRQLCALQLNEKRVDVVYAKEVDFSRAPNLFGLFANRRAALQALQTIADEQKLCYGLLGLEPLSRGRACFRSALKRCAGACCGKESHEEHALRLRQSLERLRVVCWPWQGAVALKEQHPEMTQYHIIQNWLWLGAVNSLEEATTLIRTPAGFDHDGYKILCKPLLSGNYEITELDPANDQRAS</sequence>
<proteinExistence type="evidence at protein level"/>
<accession>P76213</accession>
<accession>Q2MB42</accession>
<feature type="chain" id="PRO_0000138370" description="Excinuclease cho">
    <location>
        <begin position="1"/>
        <end position="295"/>
    </location>
</feature>
<feature type="domain" description="GIY-YIG" evidence="1">
    <location>
        <begin position="33"/>
        <end position="108"/>
    </location>
</feature>
<keyword id="KW-0227">DNA damage</keyword>
<keyword id="KW-0228">DNA excision</keyword>
<keyword id="KW-0234">DNA repair</keyword>
<keyword id="KW-0267">Excision nuclease</keyword>
<keyword id="KW-0378">Hydrolase</keyword>
<keyword id="KW-1185">Reference proteome</keyword>
<keyword id="KW-0742">SOS response</keyword>
<dbReference type="EC" id="3.1.25.-"/>
<dbReference type="EMBL" id="U00096">
    <property type="protein sequence ID" value="AAC74811.1"/>
    <property type="molecule type" value="Genomic_DNA"/>
</dbReference>
<dbReference type="EMBL" id="AP009048">
    <property type="protein sequence ID" value="BAE76514.1"/>
    <property type="molecule type" value="Genomic_DNA"/>
</dbReference>
<dbReference type="PIR" id="E64933">
    <property type="entry name" value="E64933"/>
</dbReference>
<dbReference type="RefSeq" id="NP_416255.1">
    <property type="nucleotide sequence ID" value="NC_000913.3"/>
</dbReference>
<dbReference type="RefSeq" id="WP_000252397.1">
    <property type="nucleotide sequence ID" value="NZ_SSZK01000001.1"/>
</dbReference>
<dbReference type="SMR" id="P76213"/>
<dbReference type="BioGRID" id="4261591">
    <property type="interactions" value="129"/>
</dbReference>
<dbReference type="BioGRID" id="853244">
    <property type="interactions" value="1"/>
</dbReference>
<dbReference type="DIP" id="DIP-28067N"/>
<dbReference type="FunCoup" id="P76213">
    <property type="interactions" value="15"/>
</dbReference>
<dbReference type="IntAct" id="P76213">
    <property type="interactions" value="8"/>
</dbReference>
<dbReference type="STRING" id="511145.b1741"/>
<dbReference type="PaxDb" id="511145-b1741"/>
<dbReference type="EnsemblBacteria" id="AAC74811">
    <property type="protein sequence ID" value="AAC74811"/>
    <property type="gene ID" value="b1741"/>
</dbReference>
<dbReference type="GeneID" id="93775954"/>
<dbReference type="GeneID" id="948996"/>
<dbReference type="KEGG" id="ecj:JW1730"/>
<dbReference type="KEGG" id="eco:b1741"/>
<dbReference type="KEGG" id="ecoc:C3026_09950"/>
<dbReference type="PATRIC" id="fig|1411691.4.peg.515"/>
<dbReference type="EchoBASE" id="EB3749"/>
<dbReference type="eggNOG" id="COG0322">
    <property type="taxonomic scope" value="Bacteria"/>
</dbReference>
<dbReference type="HOGENOM" id="CLU_054721_1_0_6"/>
<dbReference type="InParanoid" id="P76213"/>
<dbReference type="OMA" id="RVMSHFR"/>
<dbReference type="OrthoDB" id="9803913at2"/>
<dbReference type="PhylomeDB" id="P76213"/>
<dbReference type="BioCyc" id="EcoCyc:G6937-MONOMER"/>
<dbReference type="PRO" id="PR:P76213"/>
<dbReference type="Proteomes" id="UP000000625">
    <property type="component" value="Chromosome"/>
</dbReference>
<dbReference type="GO" id="GO:0009380">
    <property type="term" value="C:excinuclease repair complex"/>
    <property type="evidence" value="ECO:0000318"/>
    <property type="project" value="GO_Central"/>
</dbReference>
<dbReference type="GO" id="GO:0004520">
    <property type="term" value="F:DNA endonuclease activity"/>
    <property type="evidence" value="ECO:0000314"/>
    <property type="project" value="EcoCyc"/>
</dbReference>
<dbReference type="GO" id="GO:0006974">
    <property type="term" value="P:DNA damage response"/>
    <property type="evidence" value="ECO:0000270"/>
    <property type="project" value="EcoliWiki"/>
</dbReference>
<dbReference type="GO" id="GO:0006289">
    <property type="term" value="P:nucleotide-excision repair"/>
    <property type="evidence" value="ECO:0000314"/>
    <property type="project" value="EcoCyc"/>
</dbReference>
<dbReference type="GO" id="GO:0009432">
    <property type="term" value="P:SOS response"/>
    <property type="evidence" value="ECO:0000270"/>
    <property type="project" value="EcoCyc"/>
</dbReference>
<dbReference type="CDD" id="cd10434">
    <property type="entry name" value="GIY-YIG_UvrC_Cho"/>
    <property type="match status" value="1"/>
</dbReference>
<dbReference type="FunFam" id="3.40.1440.10:FF:000004">
    <property type="entry name" value="UV-repair endonuclease Cho"/>
    <property type="match status" value="1"/>
</dbReference>
<dbReference type="Gene3D" id="3.40.1440.10">
    <property type="entry name" value="GIY-YIG endonuclease"/>
    <property type="match status" value="1"/>
</dbReference>
<dbReference type="InterPro" id="IPR000305">
    <property type="entry name" value="GIY-YIG_endonuc"/>
</dbReference>
<dbReference type="InterPro" id="IPR035901">
    <property type="entry name" value="GIY-YIG_endonuc_sf"/>
</dbReference>
<dbReference type="InterPro" id="IPR047296">
    <property type="entry name" value="GIY-YIG_UvrC_Cho"/>
</dbReference>
<dbReference type="InterPro" id="IPR050066">
    <property type="entry name" value="UvrABC_protein_C"/>
</dbReference>
<dbReference type="NCBIfam" id="NF007833">
    <property type="entry name" value="PRK10545.1"/>
    <property type="match status" value="1"/>
</dbReference>
<dbReference type="PANTHER" id="PTHR30562:SF10">
    <property type="entry name" value="EXCINUCLEASE CHO"/>
    <property type="match status" value="1"/>
</dbReference>
<dbReference type="PANTHER" id="PTHR30562">
    <property type="entry name" value="UVRC/OXIDOREDUCTASE"/>
    <property type="match status" value="1"/>
</dbReference>
<dbReference type="SMART" id="SM00465">
    <property type="entry name" value="GIYc"/>
    <property type="match status" value="1"/>
</dbReference>
<dbReference type="SUPFAM" id="SSF82771">
    <property type="entry name" value="GIY-YIG endonuclease"/>
    <property type="match status" value="1"/>
</dbReference>
<dbReference type="PROSITE" id="PS50164">
    <property type="entry name" value="GIY_YIG"/>
    <property type="match status" value="1"/>
</dbReference>
<gene>
    <name type="primary">cho</name>
    <name type="synonym">dinM</name>
    <name type="synonym">sosD</name>
    <name type="synonym">ydjQ</name>
    <name type="ordered locus">b1741</name>
    <name type="ordered locus">JW1730</name>
</gene>
<comment type="function">
    <text evidence="3">Incises the DNA at the 3' side of a lesion during nucleotide excision repair. Incises the DNA farther away from the lesion than UvrC. Not able to incise the 5' site of a lesion. In vitro, the incision activity of Cho is UvrA and UvrB dependent. When a lesion remains because UvrC is not able to induce the 3' incision, Cho incises the DNA. Then UvrC makes the 5' incision. The combined action of Cho and UvrC broadens the substrate range of nucleotide excision repair.</text>
</comment>
<comment type="interaction">
    <interactant intactId="EBI-545155">
        <id>P76213</id>
    </interactant>
    <interactant intactId="EBI-543750">
        <id>P0A6F5</id>
        <label>groEL</label>
    </interactant>
    <organismsDiffer>false</organismsDiffer>
    <experiments>3</experiments>
</comment>
<comment type="induction">
    <text evidence="2">Repressed by LexA, induced by DNA damage.</text>
</comment>
<evidence type="ECO:0000255" key="1">
    <source>
        <dbReference type="PROSITE-ProRule" id="PRU00977"/>
    </source>
</evidence>
<evidence type="ECO:0000269" key="2">
    <source>
    </source>
</evidence>
<evidence type="ECO:0000269" key="3">
    <source>
    </source>
</evidence>
<name>CHO_ECOLI</name>
<reference key="1">
    <citation type="journal article" date="1997" name="Science">
        <title>The complete genome sequence of Escherichia coli K-12.</title>
        <authorList>
            <person name="Blattner F.R."/>
            <person name="Plunkett G. III"/>
            <person name="Bloch C.A."/>
            <person name="Perna N.T."/>
            <person name="Burland V."/>
            <person name="Riley M."/>
            <person name="Collado-Vides J."/>
            <person name="Glasner J.D."/>
            <person name="Rode C.K."/>
            <person name="Mayhew G.F."/>
            <person name="Gregor J."/>
            <person name="Davis N.W."/>
            <person name="Kirkpatrick H.A."/>
            <person name="Goeden M.A."/>
            <person name="Rose D.J."/>
            <person name="Mau B."/>
            <person name="Shao Y."/>
        </authorList>
    </citation>
    <scope>NUCLEOTIDE SEQUENCE [LARGE SCALE GENOMIC DNA]</scope>
    <source>
        <strain>K12 / MG1655 / ATCC 47076</strain>
    </source>
</reference>
<reference key="2">
    <citation type="journal article" date="2006" name="Mol. Syst. Biol.">
        <title>Highly accurate genome sequences of Escherichia coli K-12 strains MG1655 and W3110.</title>
        <authorList>
            <person name="Hayashi K."/>
            <person name="Morooka N."/>
            <person name="Yamamoto Y."/>
            <person name="Fujita K."/>
            <person name="Isono K."/>
            <person name="Choi S."/>
            <person name="Ohtsubo E."/>
            <person name="Baba T."/>
            <person name="Wanner B.L."/>
            <person name="Mori H."/>
            <person name="Horiuchi T."/>
        </authorList>
    </citation>
    <scope>NUCLEOTIDE SEQUENCE [LARGE SCALE GENOMIC DNA]</scope>
    <source>
        <strain>K12 / W3110 / ATCC 27325 / DSM 5911</strain>
    </source>
</reference>
<reference key="3">
    <citation type="journal article" date="2000" name="Mol. Microbiol.">
        <title>Identification of additional genes belonging to the LexA regulon in Escherichia coli.</title>
        <authorList>
            <person name="Fernandez De Henestrosa A.R."/>
            <person name="Ogi T."/>
            <person name="Aoyagi S."/>
            <person name="Chafin D."/>
            <person name="Hayes J.J."/>
            <person name="Ohmori H."/>
            <person name="Woodgate R."/>
        </authorList>
    </citation>
    <scope>REGULATION BY LEXA</scope>
    <scope>INDUCTION</scope>
    <source>
        <strain>K12 / RW118</strain>
    </source>
</reference>
<reference key="4">
    <citation type="journal article" date="2002" name="Proc. Natl. Acad. Sci. U.S.A.">
        <title>Cho, a second endonuclease involved in Escherichia coli nucleotide excision repair.</title>
        <authorList>
            <person name="Moolenaar G.F."/>
            <person name="van Rossum-Fikkert S."/>
            <person name="van Kesteren M."/>
            <person name="Goosen N."/>
        </authorList>
    </citation>
    <scope>FUNCTION</scope>
</reference>
<organism>
    <name type="scientific">Escherichia coli (strain K12)</name>
    <dbReference type="NCBI Taxonomy" id="83333"/>
    <lineage>
        <taxon>Bacteria</taxon>
        <taxon>Pseudomonadati</taxon>
        <taxon>Pseudomonadota</taxon>
        <taxon>Gammaproteobacteria</taxon>
        <taxon>Enterobacterales</taxon>
        <taxon>Enterobacteriaceae</taxon>
        <taxon>Escherichia</taxon>
    </lineage>
</organism>
<protein>
    <recommendedName>
        <fullName>Excinuclease cho</fullName>
        <ecNumber>3.1.25.-</ecNumber>
    </recommendedName>
    <alternativeName>
        <fullName>Endonuclease cho</fullName>
    </alternativeName>
    <alternativeName>
        <fullName>UvrC homolog protein</fullName>
    </alternativeName>
</protein>